<gene>
    <name type="primary">CATHL7</name>
    <name type="synonym">BMAP34</name>
</gene>
<sequence>METQRASFSLGRSSLWLLLLGLVVPSASAQDLSYREAVLRAVDQFNERSSEANLYRLLELDPPPEQDVEHPGARKPVSFTVKETVCPRTTPQPPEQCDFKENGLVKQCVGTVTRYWIRGDFDITCNNIQSAGLFRRLRDSIRRGQQKILEKARRIGERIKDIFRG</sequence>
<dbReference type="EMBL" id="Y12729">
    <property type="protein sequence ID" value="CAA73261.1"/>
    <property type="molecule type" value="Genomic_DNA"/>
</dbReference>
<dbReference type="EMBL" id="Y12728">
    <property type="protein sequence ID" value="CAA73261.1"/>
    <property type="status" value="JOINED"/>
    <property type="molecule type" value="Genomic_DNA"/>
</dbReference>
<dbReference type="EMBL" id="EU380709">
    <property type="protein sequence ID" value="ACC61287.1"/>
    <property type="molecule type" value="Genomic_DNA"/>
</dbReference>
<dbReference type="EMBL" id="EU380711">
    <property type="protein sequence ID" value="ACC61289.1"/>
    <property type="molecule type" value="Genomic_DNA"/>
</dbReference>
<dbReference type="EMBL" id="EU380715">
    <property type="protein sequence ID" value="ACC61293.1"/>
    <property type="molecule type" value="Genomic_DNA"/>
</dbReference>
<dbReference type="EMBL" id="BC149488">
    <property type="protein sequence ID" value="AAI49489.1"/>
    <property type="molecule type" value="mRNA"/>
</dbReference>
<dbReference type="EMBL" id="BC149577">
    <property type="protein sequence ID" value="AAI49578.1"/>
    <property type="molecule type" value="mRNA"/>
</dbReference>
<dbReference type="RefSeq" id="NP_777256.1">
    <property type="nucleotide sequence ID" value="NM_174831.2"/>
</dbReference>
<dbReference type="SMR" id="P56425"/>
<dbReference type="FunCoup" id="P56425">
    <property type="interactions" value="189"/>
</dbReference>
<dbReference type="STRING" id="9913.ENSBTAP00000003930"/>
<dbReference type="PaxDb" id="9913-ENSBTAP00000003930"/>
<dbReference type="PeptideAtlas" id="P56425"/>
<dbReference type="GeneID" id="317650"/>
<dbReference type="KEGG" id="bta:317650"/>
<dbReference type="CTD" id="820"/>
<dbReference type="VEuPathDB" id="HostDB:ENSBTAG00000003022"/>
<dbReference type="eggNOG" id="ENOG502SAES">
    <property type="taxonomic scope" value="Eukaryota"/>
</dbReference>
<dbReference type="HOGENOM" id="CLU_121724_1_1_1"/>
<dbReference type="InParanoid" id="P56425"/>
<dbReference type="OMA" id="KETVCPM"/>
<dbReference type="OrthoDB" id="9930485at2759"/>
<dbReference type="TreeFam" id="TF338457"/>
<dbReference type="Proteomes" id="UP000009136">
    <property type="component" value="Chromosome 22"/>
</dbReference>
<dbReference type="Bgee" id="ENSBTAG00000003022">
    <property type="expression patterns" value="Expressed in thymus and 25 other cell types or tissues"/>
</dbReference>
<dbReference type="GO" id="GO:0005615">
    <property type="term" value="C:extracellular space"/>
    <property type="evidence" value="ECO:0000318"/>
    <property type="project" value="GO_Central"/>
</dbReference>
<dbReference type="GO" id="GO:0001530">
    <property type="term" value="F:lipopolysaccharide binding"/>
    <property type="evidence" value="ECO:0000318"/>
    <property type="project" value="GO_Central"/>
</dbReference>
<dbReference type="GO" id="GO:0061844">
    <property type="term" value="P:antimicrobial humoral immune response mediated by antimicrobial peptide"/>
    <property type="evidence" value="ECO:0000318"/>
    <property type="project" value="GO_Central"/>
</dbReference>
<dbReference type="GO" id="GO:0050829">
    <property type="term" value="P:defense response to Gram-negative bacterium"/>
    <property type="evidence" value="ECO:0000318"/>
    <property type="project" value="GO_Central"/>
</dbReference>
<dbReference type="GO" id="GO:0050830">
    <property type="term" value="P:defense response to Gram-positive bacterium"/>
    <property type="evidence" value="ECO:0000318"/>
    <property type="project" value="GO_Central"/>
</dbReference>
<dbReference type="GO" id="GO:0045087">
    <property type="term" value="P:innate immune response"/>
    <property type="evidence" value="ECO:0000318"/>
    <property type="project" value="GO_Central"/>
</dbReference>
<dbReference type="FunFam" id="3.10.450.10:FF:000003">
    <property type="entry name" value="Cathelicidin antimicrobial peptide"/>
    <property type="match status" value="1"/>
</dbReference>
<dbReference type="Gene3D" id="3.10.450.10">
    <property type="match status" value="1"/>
</dbReference>
<dbReference type="InterPro" id="IPR001894">
    <property type="entry name" value="Cathelicidin-like"/>
</dbReference>
<dbReference type="InterPro" id="IPR018216">
    <property type="entry name" value="Cathelicidin_CS"/>
</dbReference>
<dbReference type="InterPro" id="IPR022746">
    <property type="entry name" value="Cathlecidin_C"/>
</dbReference>
<dbReference type="InterPro" id="IPR046350">
    <property type="entry name" value="Cystatin_sf"/>
</dbReference>
<dbReference type="PANTHER" id="PTHR10206">
    <property type="entry name" value="CATHELICIDIN"/>
    <property type="match status" value="1"/>
</dbReference>
<dbReference type="PANTHER" id="PTHR10206:SF2">
    <property type="entry name" value="CATHELICIDIN ANTIMICROBIAL PEPTIDE"/>
    <property type="match status" value="1"/>
</dbReference>
<dbReference type="Pfam" id="PF12153">
    <property type="entry name" value="CAP18_C"/>
    <property type="match status" value="1"/>
</dbReference>
<dbReference type="Pfam" id="PF00666">
    <property type="entry name" value="Cathelicidins"/>
    <property type="match status" value="1"/>
</dbReference>
<dbReference type="SUPFAM" id="SSF54403">
    <property type="entry name" value="Cystatin/monellin"/>
    <property type="match status" value="1"/>
</dbReference>
<dbReference type="PROSITE" id="PS00946">
    <property type="entry name" value="CATHELICIDINS_1"/>
    <property type="match status" value="1"/>
</dbReference>
<dbReference type="PROSITE" id="PS00947">
    <property type="entry name" value="CATHELICIDINS_2"/>
    <property type="match status" value="1"/>
</dbReference>
<reference key="1">
    <citation type="journal article" date="1997" name="FEBS Lett.">
        <title>Structural organization of the bovine cathelicidin gene family and identification of a novel member.</title>
        <authorList>
            <person name="Scocchi M."/>
            <person name="Wang S."/>
            <person name="Zanetti M."/>
        </authorList>
    </citation>
    <scope>NUCLEOTIDE SEQUENCE [GENOMIC DNA]</scope>
</reference>
<reference key="2">
    <citation type="journal article" date="2009" name="J. Hered.">
        <title>Sequence analysis and polymorphism discovery in 4 members of the bovine cathelicidin gene family.</title>
        <authorList>
            <person name="Gillenwaters E.N."/>
            <person name="Seabury C.M."/>
            <person name="Elliott J.S."/>
            <person name="Womack J.E."/>
        </authorList>
    </citation>
    <scope>NUCLEOTIDE SEQUENCE [GENOMIC DNA]</scope>
    <source>
        <strain>Isolate 44N</strain>
        <strain>Isolate 80U</strain>
        <strain>Isolate JEW38</strain>
    </source>
</reference>
<reference key="3">
    <citation type="submission" date="2007-07" db="EMBL/GenBank/DDBJ databases">
        <authorList>
            <consortium name="NIH - Mammalian Gene Collection (MGC) project"/>
        </authorList>
    </citation>
    <scope>NUCLEOTIDE SEQUENCE [LARGE SCALE MRNA]</scope>
    <source>
        <strain>Hereford</strain>
        <tissue>Hypothalamus</tissue>
        <tissue>Thymus</tissue>
    </source>
</reference>
<organism>
    <name type="scientific">Bos taurus</name>
    <name type="common">Bovine</name>
    <dbReference type="NCBI Taxonomy" id="9913"/>
    <lineage>
        <taxon>Eukaryota</taxon>
        <taxon>Metazoa</taxon>
        <taxon>Chordata</taxon>
        <taxon>Craniata</taxon>
        <taxon>Vertebrata</taxon>
        <taxon>Euteleostomi</taxon>
        <taxon>Mammalia</taxon>
        <taxon>Eutheria</taxon>
        <taxon>Laurasiatheria</taxon>
        <taxon>Artiodactyla</taxon>
        <taxon>Ruminantia</taxon>
        <taxon>Pecora</taxon>
        <taxon>Bovidae</taxon>
        <taxon>Bovinae</taxon>
        <taxon>Bos</taxon>
    </lineage>
</organism>
<evidence type="ECO:0000250" key="1"/>
<evidence type="ECO:0000255" key="2"/>
<evidence type="ECO:0000305" key="3"/>
<proteinExistence type="evidence at transcript level"/>
<comment type="function">
    <text>Exerts a potent antimicrobial activity.</text>
</comment>
<comment type="subcellular location">
    <subcellularLocation>
        <location>Secreted</location>
    </subcellularLocation>
</comment>
<comment type="tissue specificity">
    <text>Expressed in bone marrow myeloid cells, spleen and testis.</text>
</comment>
<comment type="similarity">
    <text evidence="3">Belongs to the cathelicidin family.</text>
</comment>
<keyword id="KW-0027">Amidation</keyword>
<keyword id="KW-0044">Antibiotic</keyword>
<keyword id="KW-0929">Antimicrobial</keyword>
<keyword id="KW-1015">Disulfide bond</keyword>
<keyword id="KW-1185">Reference proteome</keyword>
<keyword id="KW-0964">Secreted</keyword>
<keyword id="KW-0732">Signal</keyword>
<protein>
    <recommendedName>
        <fullName>Cathelicidin-7</fullName>
    </recommendedName>
    <alternativeName>
        <fullName>Antibacterial peptide BMAP-34</fullName>
    </alternativeName>
</protein>
<accession>P56425</accession>
<accession>A6QPU1</accession>
<accession>B9TUC8</accession>
<name>CTHL7_BOVIN</name>
<feature type="signal peptide" evidence="2">
    <location>
        <begin position="1"/>
        <end position="29"/>
    </location>
</feature>
<feature type="propeptide" id="PRO_0000004718" evidence="2">
    <location>
        <begin position="30"/>
        <end position="130"/>
    </location>
</feature>
<feature type="peptide" id="PRO_0000004719" description="Cathelicidin-7">
    <location>
        <begin position="131"/>
        <end position="164"/>
    </location>
</feature>
<feature type="modified residue" description="Arginine amide" evidence="2">
    <location>
        <position position="164"/>
    </location>
</feature>
<feature type="disulfide bond" evidence="1">
    <location>
        <begin position="86"/>
        <end position="97"/>
    </location>
</feature>
<feature type="disulfide bond" evidence="1">
    <location>
        <begin position="108"/>
        <end position="125"/>
    </location>
</feature>